<comment type="subcellular location">
    <subcellularLocation>
        <location evidence="3">Vacuole membrane</location>
        <topology evidence="3">Multi-pass membrane protein</topology>
    </subcellularLocation>
</comment>
<organism>
    <name type="scientific">Saccharomyces cerevisiae (strain ATCC 204508 / S288c)</name>
    <name type="common">Baker's yeast</name>
    <dbReference type="NCBI Taxonomy" id="559292"/>
    <lineage>
        <taxon>Eukaryota</taxon>
        <taxon>Fungi</taxon>
        <taxon>Dikarya</taxon>
        <taxon>Ascomycota</taxon>
        <taxon>Saccharomycotina</taxon>
        <taxon>Saccharomycetes</taxon>
        <taxon>Saccharomycetales</taxon>
        <taxon>Saccharomycetaceae</taxon>
        <taxon>Saccharomyces</taxon>
    </lineage>
</organism>
<gene>
    <name type="ordered locus">YDL180W</name>
</gene>
<keyword id="KW-0472">Membrane</keyword>
<keyword id="KW-0597">Phosphoprotein</keyword>
<keyword id="KW-1185">Reference proteome</keyword>
<keyword id="KW-0812">Transmembrane</keyword>
<keyword id="KW-1133">Transmembrane helix</keyword>
<keyword id="KW-0926">Vacuole</keyword>
<protein>
    <recommendedName>
        <fullName>Uncharacterized membrane protein YDL180W</fullName>
    </recommendedName>
</protein>
<evidence type="ECO:0000255" key="1"/>
<evidence type="ECO:0000256" key="2">
    <source>
        <dbReference type="SAM" id="MobiDB-lite"/>
    </source>
</evidence>
<evidence type="ECO:0000269" key="3">
    <source>
    </source>
</evidence>
<evidence type="ECO:0007744" key="4">
    <source>
    </source>
</evidence>
<proteinExistence type="evidence at protein level"/>
<feature type="chain" id="PRO_0000241453" description="Uncharacterized membrane protein YDL180W">
    <location>
        <begin position="1"/>
        <end position="547"/>
    </location>
</feature>
<feature type="topological domain" description="Cytoplasmic" evidence="1">
    <location>
        <begin position="1"/>
        <end position="19"/>
    </location>
</feature>
<feature type="transmembrane region" description="Helical" evidence="1">
    <location>
        <begin position="20"/>
        <end position="40"/>
    </location>
</feature>
<feature type="topological domain" description="Vacuolar" evidence="1">
    <location>
        <begin position="41"/>
        <end position="64"/>
    </location>
</feature>
<feature type="transmembrane region" description="Helical" evidence="1">
    <location>
        <begin position="65"/>
        <end position="85"/>
    </location>
</feature>
<feature type="topological domain" description="Cytoplasmic" evidence="1">
    <location>
        <begin position="86"/>
        <end position="89"/>
    </location>
</feature>
<feature type="transmembrane region" description="Helical" evidence="1">
    <location>
        <begin position="90"/>
        <end position="110"/>
    </location>
</feature>
<feature type="topological domain" description="Vacuolar" evidence="1">
    <location>
        <begin position="111"/>
        <end position="139"/>
    </location>
</feature>
<feature type="transmembrane region" description="Helical" evidence="1">
    <location>
        <begin position="140"/>
        <end position="160"/>
    </location>
</feature>
<feature type="topological domain" description="Cytoplasmic" evidence="1">
    <location>
        <begin position="161"/>
        <end position="340"/>
    </location>
</feature>
<feature type="transmembrane region" description="Helical" evidence="1">
    <location>
        <begin position="341"/>
        <end position="361"/>
    </location>
</feature>
<feature type="topological domain" description="Vacuolar" evidence="1">
    <location>
        <begin position="362"/>
        <end position="394"/>
    </location>
</feature>
<feature type="transmembrane region" description="Helical" evidence="1">
    <location>
        <begin position="395"/>
        <end position="415"/>
    </location>
</feature>
<feature type="topological domain" description="Cytoplasmic" evidence="1">
    <location>
        <begin position="416"/>
        <end position="523"/>
    </location>
</feature>
<feature type="transmembrane region" description="Helical" evidence="1">
    <location>
        <begin position="524"/>
        <end position="544"/>
    </location>
</feature>
<feature type="topological domain" description="Vacuolar" evidence="1">
    <location>
        <begin position="545"/>
        <end position="547"/>
    </location>
</feature>
<feature type="region of interest" description="Disordered" evidence="2">
    <location>
        <begin position="237"/>
        <end position="271"/>
    </location>
</feature>
<feature type="compositionally biased region" description="Polar residues" evidence="2">
    <location>
        <begin position="242"/>
        <end position="253"/>
    </location>
</feature>
<feature type="modified residue" description="Phosphoserine" evidence="4">
    <location>
        <position position="225"/>
    </location>
</feature>
<name>YD180_YEAST</name>
<sequence length="547" mass="62288">MVRLNHAASYFMPIFCSTRPHIVILSALFSISLFSLFYASSELLLHQYDDPLMFKPNSQDYFRTFLLGLFSPFLYYFLKTFLFNINQRFLILNLIVDFPINDVFMLLILIGLAYPQVQDHEGGTIKHKECSWHIIPRQAYIFGISWALGEFTICIIGNLFNYQEIADPNINSGFTHQESANTYCNNNDMSHNDDCGCSTEYRPNVVDRSDITLSKCIEVRNDSSSISNNVYSSEYHPIKPLRSSSSTYGSIRQQPHENKKQLHVPDNSQDDTIIMMNPIDNSLKLTTLDTGDLSFPIDEEQPILKKSFGYTWAVPNENTQNTTKSFTPIKRFIAFSTAYQLVTGLLLMILVVGSNIMLTIGESLILSMYFVYVRGHEGLFTPVVNYFGSRTISNFILCVIIPFISLNFLINTSIYLRRELDDWFNNSQGEFEDDDENTISKRVATNQEYQHPLSANYISMDSPDVINSSPGHFGMNSGQLLGNTTLYYGSLNGDDDDMTNDSALLRFCKKLVKNWRALARNDSFVLGVMVSWSLLVFVTGILSTVYI</sequence>
<reference key="1">
    <citation type="journal article" date="1997" name="Nature">
        <title>The nucleotide sequence of Saccharomyces cerevisiae chromosome IV.</title>
        <authorList>
            <person name="Jacq C."/>
            <person name="Alt-Moerbe J."/>
            <person name="Andre B."/>
            <person name="Arnold W."/>
            <person name="Bahr A."/>
            <person name="Ballesta J.P.G."/>
            <person name="Bargues M."/>
            <person name="Baron L."/>
            <person name="Becker A."/>
            <person name="Biteau N."/>
            <person name="Bloecker H."/>
            <person name="Blugeon C."/>
            <person name="Boskovic J."/>
            <person name="Brandt P."/>
            <person name="Brueckner M."/>
            <person name="Buitrago M.J."/>
            <person name="Coster F."/>
            <person name="Delaveau T."/>
            <person name="del Rey F."/>
            <person name="Dujon B."/>
            <person name="Eide L.G."/>
            <person name="Garcia-Cantalejo J.M."/>
            <person name="Goffeau A."/>
            <person name="Gomez-Peris A."/>
            <person name="Granotier C."/>
            <person name="Hanemann V."/>
            <person name="Hankeln T."/>
            <person name="Hoheisel J.D."/>
            <person name="Jaeger W."/>
            <person name="Jimenez A."/>
            <person name="Jonniaux J.-L."/>
            <person name="Kraemer C."/>
            <person name="Kuester H."/>
            <person name="Laamanen P."/>
            <person name="Legros Y."/>
            <person name="Louis E.J."/>
            <person name="Moeller-Rieker S."/>
            <person name="Monnet A."/>
            <person name="Moro M."/>
            <person name="Mueller-Auer S."/>
            <person name="Nussbaumer B."/>
            <person name="Paricio N."/>
            <person name="Paulin L."/>
            <person name="Perea J."/>
            <person name="Perez-Alonso M."/>
            <person name="Perez-Ortin J.E."/>
            <person name="Pohl T.M."/>
            <person name="Prydz H."/>
            <person name="Purnelle B."/>
            <person name="Rasmussen S.W."/>
            <person name="Remacha M.A."/>
            <person name="Revuelta J.L."/>
            <person name="Rieger M."/>
            <person name="Salom D."/>
            <person name="Saluz H.P."/>
            <person name="Saiz J.E."/>
            <person name="Saren A.-M."/>
            <person name="Schaefer M."/>
            <person name="Scharfe M."/>
            <person name="Schmidt E.R."/>
            <person name="Schneider C."/>
            <person name="Scholler P."/>
            <person name="Schwarz S."/>
            <person name="Soler-Mira A."/>
            <person name="Urrestarazu L.A."/>
            <person name="Verhasselt P."/>
            <person name="Vissers S."/>
            <person name="Voet M."/>
            <person name="Volckaert G."/>
            <person name="Wagner G."/>
            <person name="Wambutt R."/>
            <person name="Wedler E."/>
            <person name="Wedler H."/>
            <person name="Woelfl S."/>
            <person name="Harris D.E."/>
            <person name="Bowman S."/>
            <person name="Brown D."/>
            <person name="Churcher C.M."/>
            <person name="Connor R."/>
            <person name="Dedman K."/>
            <person name="Gentles S."/>
            <person name="Hamlin N."/>
            <person name="Hunt S."/>
            <person name="Jones L."/>
            <person name="McDonald S."/>
            <person name="Murphy L.D."/>
            <person name="Niblett D."/>
            <person name="Odell C."/>
            <person name="Oliver K."/>
            <person name="Rajandream M.A."/>
            <person name="Richards C."/>
            <person name="Shore L."/>
            <person name="Walsh S.V."/>
            <person name="Barrell B.G."/>
            <person name="Dietrich F.S."/>
            <person name="Mulligan J.T."/>
            <person name="Allen E."/>
            <person name="Araujo R."/>
            <person name="Aviles E."/>
            <person name="Berno A."/>
            <person name="Carpenter J."/>
            <person name="Chen E."/>
            <person name="Cherry J.M."/>
            <person name="Chung E."/>
            <person name="Duncan M."/>
            <person name="Hunicke-Smith S."/>
            <person name="Hyman R.W."/>
            <person name="Komp C."/>
            <person name="Lashkari D."/>
            <person name="Lew H."/>
            <person name="Lin D."/>
            <person name="Mosedale D."/>
            <person name="Nakahara K."/>
            <person name="Namath A."/>
            <person name="Oefner P."/>
            <person name="Oh C."/>
            <person name="Petel F.X."/>
            <person name="Roberts D."/>
            <person name="Schramm S."/>
            <person name="Schroeder M."/>
            <person name="Shogren T."/>
            <person name="Shroff N."/>
            <person name="Winant A."/>
            <person name="Yelton M.A."/>
            <person name="Botstein D."/>
            <person name="Davis R.W."/>
            <person name="Johnston M."/>
            <person name="Andrews S."/>
            <person name="Brinkman R."/>
            <person name="Cooper J."/>
            <person name="Ding H."/>
            <person name="Du Z."/>
            <person name="Favello A."/>
            <person name="Fulton L."/>
            <person name="Gattung S."/>
            <person name="Greco T."/>
            <person name="Hallsworth K."/>
            <person name="Hawkins J."/>
            <person name="Hillier L.W."/>
            <person name="Jier M."/>
            <person name="Johnson D."/>
            <person name="Johnston L."/>
            <person name="Kirsten J."/>
            <person name="Kucaba T."/>
            <person name="Langston Y."/>
            <person name="Latreille P."/>
            <person name="Le T."/>
            <person name="Mardis E."/>
            <person name="Menezes S."/>
            <person name="Miller N."/>
            <person name="Nhan M."/>
            <person name="Pauley A."/>
            <person name="Peluso D."/>
            <person name="Rifkin L."/>
            <person name="Riles L."/>
            <person name="Taich A."/>
            <person name="Trevaskis E."/>
            <person name="Vignati D."/>
            <person name="Wilcox L."/>
            <person name="Wohldman P."/>
            <person name="Vaudin M."/>
            <person name="Wilson R."/>
            <person name="Waterston R."/>
            <person name="Albermann K."/>
            <person name="Hani J."/>
            <person name="Heumann K."/>
            <person name="Kleine K."/>
            <person name="Mewes H.-W."/>
            <person name="Zollner A."/>
            <person name="Zaccaria P."/>
        </authorList>
    </citation>
    <scope>NUCLEOTIDE SEQUENCE [LARGE SCALE GENOMIC DNA]</scope>
    <source>
        <strain>ATCC 204508 / S288c</strain>
    </source>
</reference>
<reference key="2">
    <citation type="journal article" date="2014" name="G3 (Bethesda)">
        <title>The reference genome sequence of Saccharomyces cerevisiae: Then and now.</title>
        <authorList>
            <person name="Engel S.R."/>
            <person name="Dietrich F.S."/>
            <person name="Fisk D.G."/>
            <person name="Binkley G."/>
            <person name="Balakrishnan R."/>
            <person name="Costanzo M.C."/>
            <person name="Dwight S.S."/>
            <person name="Hitz B.C."/>
            <person name="Karra K."/>
            <person name="Nash R.S."/>
            <person name="Weng S."/>
            <person name="Wong E.D."/>
            <person name="Lloyd P."/>
            <person name="Skrzypek M.S."/>
            <person name="Miyasato S.R."/>
            <person name="Simison M."/>
            <person name="Cherry J.M."/>
        </authorList>
    </citation>
    <scope>GENOME REANNOTATION</scope>
    <source>
        <strain>ATCC 204508 / S288c</strain>
    </source>
</reference>
<reference key="3">
    <citation type="journal article" date="2003" name="Nature">
        <title>Global analysis of protein localization in budding yeast.</title>
        <authorList>
            <person name="Huh W.-K."/>
            <person name="Falvo J.V."/>
            <person name="Gerke L.C."/>
            <person name="Carroll A.S."/>
            <person name="Howson R.W."/>
            <person name="Weissman J.S."/>
            <person name="O'Shea E.K."/>
        </authorList>
    </citation>
    <scope>SUBCELLULAR LOCATION [LARGE SCALE ANALYSIS]</scope>
</reference>
<reference key="4">
    <citation type="journal article" date="2006" name="Proc. Natl. Acad. Sci. U.S.A.">
        <title>A global topology map of the Saccharomyces cerevisiae membrane proteome.</title>
        <authorList>
            <person name="Kim H."/>
            <person name="Melen K."/>
            <person name="Oesterberg M."/>
            <person name="von Heijne G."/>
        </authorList>
    </citation>
    <scope>TOPOLOGY [LARGE SCALE ANALYSIS]</scope>
    <source>
        <strain>ATCC 208353 / W303-1A</strain>
    </source>
</reference>
<reference key="5">
    <citation type="journal article" date="2008" name="Mol. Cell. Proteomics">
        <title>A multidimensional chromatography technology for in-depth phosphoproteome analysis.</title>
        <authorList>
            <person name="Albuquerque C.P."/>
            <person name="Smolka M.B."/>
            <person name="Payne S.H."/>
            <person name="Bafna V."/>
            <person name="Eng J."/>
            <person name="Zhou H."/>
        </authorList>
    </citation>
    <scope>IDENTIFICATION BY MASS SPECTROMETRY [LARGE SCALE ANALYSIS]</scope>
</reference>
<reference key="6">
    <citation type="journal article" date="2009" name="Science">
        <title>Global analysis of Cdk1 substrate phosphorylation sites provides insights into evolution.</title>
        <authorList>
            <person name="Holt L.J."/>
            <person name="Tuch B.B."/>
            <person name="Villen J."/>
            <person name="Johnson A.D."/>
            <person name="Gygi S.P."/>
            <person name="Morgan D.O."/>
        </authorList>
    </citation>
    <scope>PHOSPHORYLATION [LARGE SCALE ANALYSIS] AT SER-225</scope>
    <scope>IDENTIFICATION BY MASS SPECTROMETRY [LARGE SCALE ANALYSIS]</scope>
</reference>
<dbReference type="EMBL" id="Z67750">
    <property type="protein sequence ID" value="CAA91565.1"/>
    <property type="molecule type" value="Genomic_DNA"/>
</dbReference>
<dbReference type="EMBL" id="Z74228">
    <property type="protein sequence ID" value="CAA98754.1"/>
    <property type="molecule type" value="Genomic_DNA"/>
</dbReference>
<dbReference type="EMBL" id="BK006938">
    <property type="protein sequence ID" value="DAA11682.1"/>
    <property type="molecule type" value="Genomic_DNA"/>
</dbReference>
<dbReference type="PIR" id="S61032">
    <property type="entry name" value="S61032"/>
</dbReference>
<dbReference type="SMR" id="Q12301"/>
<dbReference type="BioGRID" id="31886">
    <property type="interactions" value="188"/>
</dbReference>
<dbReference type="DIP" id="DIP-8940N"/>
<dbReference type="FunCoup" id="Q12301">
    <property type="interactions" value="31"/>
</dbReference>
<dbReference type="IntAct" id="Q12301">
    <property type="interactions" value="2"/>
</dbReference>
<dbReference type="STRING" id="4932.YDL180W"/>
<dbReference type="iPTMnet" id="Q12301"/>
<dbReference type="PaxDb" id="4932-YDL180W"/>
<dbReference type="PeptideAtlas" id="Q12301"/>
<dbReference type="EnsemblFungi" id="YDL180W_mRNA">
    <property type="protein sequence ID" value="YDL180W"/>
    <property type="gene ID" value="YDL180W"/>
</dbReference>
<dbReference type="KEGG" id="sce:YDL180W"/>
<dbReference type="AGR" id="SGD:S000002339"/>
<dbReference type="SGD" id="S000002339">
    <property type="gene designation" value="YDL180W"/>
</dbReference>
<dbReference type="VEuPathDB" id="FungiDB:YDL180W"/>
<dbReference type="eggNOG" id="ENOG502QW37">
    <property type="taxonomic scope" value="Eukaryota"/>
</dbReference>
<dbReference type="HOGENOM" id="CLU_036939_0_0_1"/>
<dbReference type="InParanoid" id="Q12301"/>
<dbReference type="OMA" id="YIFGISW"/>
<dbReference type="OrthoDB" id="4033420at2759"/>
<dbReference type="BioCyc" id="YEAST:G3O-29567-MONOMER"/>
<dbReference type="BioGRID-ORCS" id="851374">
    <property type="hits" value="0 hits in 10 CRISPR screens"/>
</dbReference>
<dbReference type="PRO" id="PR:Q12301"/>
<dbReference type="Proteomes" id="UP000002311">
    <property type="component" value="Chromosome IV"/>
</dbReference>
<dbReference type="RNAct" id="Q12301">
    <property type="molecule type" value="protein"/>
</dbReference>
<dbReference type="GO" id="GO:0000324">
    <property type="term" value="C:fungal-type vacuole"/>
    <property type="evidence" value="ECO:0007005"/>
    <property type="project" value="SGD"/>
</dbReference>
<dbReference type="GO" id="GO:0000329">
    <property type="term" value="C:fungal-type vacuole membrane"/>
    <property type="evidence" value="ECO:0000314"/>
    <property type="project" value="SGD"/>
</dbReference>
<dbReference type="GO" id="GO:1904262">
    <property type="term" value="P:negative regulation of TORC1 signaling"/>
    <property type="evidence" value="ECO:0000315"/>
    <property type="project" value="SGD"/>
</dbReference>
<accession>Q12301</accession>
<accession>D6VRH2</accession>